<keyword id="KW-0489">Methyltransferase</keyword>
<keyword id="KW-0949">S-adenosyl-L-methionine</keyword>
<keyword id="KW-0808">Transferase</keyword>
<keyword id="KW-0819">tRNA processing</keyword>
<gene>
    <name evidence="1" type="primary">trmA</name>
    <name type="ordered locus">APJL_2028</name>
</gene>
<comment type="function">
    <text evidence="1">Dual-specificity methyltransferase that catalyzes the formation of 5-methyluridine at position 54 (m5U54) in all tRNAs, and that of position 341 (m5U341) in tmRNA (transfer-mRNA).</text>
</comment>
<comment type="catalytic activity">
    <reaction evidence="1">
        <text>uridine(54) in tRNA + S-adenosyl-L-methionine = 5-methyluridine(54) in tRNA + S-adenosyl-L-homocysteine + H(+)</text>
        <dbReference type="Rhea" id="RHEA:42712"/>
        <dbReference type="Rhea" id="RHEA-COMP:10167"/>
        <dbReference type="Rhea" id="RHEA-COMP:10193"/>
        <dbReference type="ChEBI" id="CHEBI:15378"/>
        <dbReference type="ChEBI" id="CHEBI:57856"/>
        <dbReference type="ChEBI" id="CHEBI:59789"/>
        <dbReference type="ChEBI" id="CHEBI:65315"/>
        <dbReference type="ChEBI" id="CHEBI:74447"/>
        <dbReference type="EC" id="2.1.1.35"/>
    </reaction>
</comment>
<comment type="catalytic activity">
    <reaction evidence="1">
        <text>uridine(341) in tmRNA + S-adenosyl-L-methionine = 5-methyluridine(341) in tmRNA + S-adenosyl-L-homocysteine + H(+)</text>
        <dbReference type="Rhea" id="RHEA:43612"/>
        <dbReference type="Rhea" id="RHEA-COMP:10630"/>
        <dbReference type="Rhea" id="RHEA-COMP:10631"/>
        <dbReference type="ChEBI" id="CHEBI:15378"/>
        <dbReference type="ChEBI" id="CHEBI:57856"/>
        <dbReference type="ChEBI" id="CHEBI:59789"/>
        <dbReference type="ChEBI" id="CHEBI:65315"/>
        <dbReference type="ChEBI" id="CHEBI:74447"/>
    </reaction>
</comment>
<comment type="similarity">
    <text evidence="1">Belongs to the class I-like SAM-binding methyltransferase superfamily. RNA M5U methyltransferase family. TrmA subfamily.</text>
</comment>
<name>TRMA_ACTPJ</name>
<protein>
    <recommendedName>
        <fullName evidence="1">tRNA/tmRNA (uracil-C(5))-methyltransferase</fullName>
        <ecNumber evidence="1">2.1.1.-</ecNumber>
        <ecNumber evidence="1">2.1.1.35</ecNumber>
    </recommendedName>
    <alternativeName>
        <fullName evidence="1">tRNA (uracil(54)-C(5))-methyltransferase</fullName>
    </alternativeName>
    <alternativeName>
        <fullName evidence="1">tRNA(m5U54)-methyltransferase</fullName>
        <shortName evidence="1">RUMT</shortName>
    </alternativeName>
    <alternativeName>
        <fullName evidence="1">tmRNA (uracil(341)-C(5))-methyltransferase</fullName>
    </alternativeName>
</protein>
<sequence length="368" mass="42520">MNLPIEQYADLLAEKAKNLTALLAPFNPPELEVFESETSHFRMRAEFRVWHDTNEVGENELYHIMFDQETKQRYRVDQFPIANHLINKMMSSLLAEIKGNELLTRKLFQVDYLSTLSGEIAVSMLYHKKLNEEWQAEAAALKARLEHQGFKVQILGRATKQKIALDRDYVEEVLPVDGRNLIYRQVENSFTQPNAKMNIKMLEWARSCTRHSSGDLLELYCGNGNFSIALAENFRKVLATEISKSSVQSAQYNIEQNGIDNLQIIRMSAEEFTQAMNGVREFNRLKGIDLKAYDCNTIFVDPPRAGLDQDTLNMVQAYERILYISCNPHTLADNLQQLTQTHRIERAALFDQFPYTHHVESGVWLIRK</sequence>
<evidence type="ECO:0000255" key="1">
    <source>
        <dbReference type="HAMAP-Rule" id="MF_01011"/>
    </source>
</evidence>
<dbReference type="EC" id="2.1.1.-" evidence="1"/>
<dbReference type="EC" id="2.1.1.35" evidence="1"/>
<dbReference type="EMBL" id="CP000687">
    <property type="protein sequence ID" value="ABY70573.1"/>
    <property type="molecule type" value="Genomic_DNA"/>
</dbReference>
<dbReference type="RefSeq" id="WP_012263471.1">
    <property type="nucleotide sequence ID" value="NC_010278.1"/>
</dbReference>
<dbReference type="SMR" id="B0BU06"/>
<dbReference type="KEGG" id="apj:APJL_2028"/>
<dbReference type="HOGENOM" id="CLU_043022_0_0_6"/>
<dbReference type="Proteomes" id="UP000008547">
    <property type="component" value="Chromosome"/>
</dbReference>
<dbReference type="GO" id="GO:0005829">
    <property type="term" value="C:cytosol"/>
    <property type="evidence" value="ECO:0007669"/>
    <property type="project" value="TreeGrafter"/>
</dbReference>
<dbReference type="GO" id="GO:0019843">
    <property type="term" value="F:rRNA binding"/>
    <property type="evidence" value="ECO:0007669"/>
    <property type="project" value="TreeGrafter"/>
</dbReference>
<dbReference type="GO" id="GO:0030697">
    <property type="term" value="F:tRNA (uracil(54)-C5)-methyltransferase activity, S-adenosyl methionine-dependent"/>
    <property type="evidence" value="ECO:0007669"/>
    <property type="project" value="UniProtKB-UniRule"/>
</dbReference>
<dbReference type="GO" id="GO:0000049">
    <property type="term" value="F:tRNA binding"/>
    <property type="evidence" value="ECO:0007669"/>
    <property type="project" value="TreeGrafter"/>
</dbReference>
<dbReference type="GO" id="GO:0030488">
    <property type="term" value="P:tRNA methylation"/>
    <property type="evidence" value="ECO:0007669"/>
    <property type="project" value="UniProtKB-UniRule"/>
</dbReference>
<dbReference type="CDD" id="cd02440">
    <property type="entry name" value="AdoMet_MTases"/>
    <property type="match status" value="1"/>
</dbReference>
<dbReference type="FunFam" id="2.40.50.1070:FF:000001">
    <property type="entry name" value="tRNA/tmRNA (uracil-C(5))-methyltransferase"/>
    <property type="match status" value="1"/>
</dbReference>
<dbReference type="FunFam" id="3.40.50.150:FF:000012">
    <property type="entry name" value="tRNA/tmRNA (uracil-C(5))-methyltransferase"/>
    <property type="match status" value="1"/>
</dbReference>
<dbReference type="Gene3D" id="2.40.50.1070">
    <property type="match status" value="1"/>
</dbReference>
<dbReference type="Gene3D" id="3.40.50.150">
    <property type="entry name" value="Vaccinia Virus protein VP39"/>
    <property type="match status" value="1"/>
</dbReference>
<dbReference type="HAMAP" id="MF_01011">
    <property type="entry name" value="RNA_methyltr_TrmA"/>
    <property type="match status" value="1"/>
</dbReference>
<dbReference type="InterPro" id="IPR030390">
    <property type="entry name" value="MeTrfase_TrmA_AS"/>
</dbReference>
<dbReference type="InterPro" id="IPR030391">
    <property type="entry name" value="MeTrfase_TrmA_CS"/>
</dbReference>
<dbReference type="InterPro" id="IPR029063">
    <property type="entry name" value="SAM-dependent_MTases_sf"/>
</dbReference>
<dbReference type="InterPro" id="IPR011869">
    <property type="entry name" value="TrmA_MeTrfase"/>
</dbReference>
<dbReference type="InterPro" id="IPR010280">
    <property type="entry name" value="U5_MeTrfase_fam"/>
</dbReference>
<dbReference type="NCBIfam" id="TIGR02143">
    <property type="entry name" value="trmA_only"/>
    <property type="match status" value="1"/>
</dbReference>
<dbReference type="PANTHER" id="PTHR47790">
    <property type="entry name" value="TRNA/TMRNA (URACIL-C(5))-METHYLTRANSFERASE"/>
    <property type="match status" value="1"/>
</dbReference>
<dbReference type="PANTHER" id="PTHR47790:SF2">
    <property type="entry name" value="TRNA_TMRNA (URACIL-C(5))-METHYLTRANSFERASE"/>
    <property type="match status" value="1"/>
</dbReference>
<dbReference type="Pfam" id="PF05958">
    <property type="entry name" value="tRNA_U5-meth_tr"/>
    <property type="match status" value="1"/>
</dbReference>
<dbReference type="SUPFAM" id="SSF53335">
    <property type="entry name" value="S-adenosyl-L-methionine-dependent methyltransferases"/>
    <property type="match status" value="1"/>
</dbReference>
<dbReference type="PROSITE" id="PS51687">
    <property type="entry name" value="SAM_MT_RNA_M5U"/>
    <property type="match status" value="1"/>
</dbReference>
<dbReference type="PROSITE" id="PS01230">
    <property type="entry name" value="TRMA_1"/>
    <property type="match status" value="1"/>
</dbReference>
<dbReference type="PROSITE" id="PS01231">
    <property type="entry name" value="TRMA_2"/>
    <property type="match status" value="1"/>
</dbReference>
<accession>B0BU06</accession>
<proteinExistence type="inferred from homology"/>
<organism>
    <name type="scientific">Actinobacillus pleuropneumoniae serotype 3 (strain JL03)</name>
    <dbReference type="NCBI Taxonomy" id="434271"/>
    <lineage>
        <taxon>Bacteria</taxon>
        <taxon>Pseudomonadati</taxon>
        <taxon>Pseudomonadota</taxon>
        <taxon>Gammaproteobacteria</taxon>
        <taxon>Pasteurellales</taxon>
        <taxon>Pasteurellaceae</taxon>
        <taxon>Actinobacillus</taxon>
    </lineage>
</organism>
<reference key="1">
    <citation type="journal article" date="2008" name="PLoS ONE">
        <title>Genome biology of Actinobacillus pleuropneumoniae JL03, an isolate of serotype 3 prevalent in China.</title>
        <authorList>
            <person name="Xu Z."/>
            <person name="Zhou Y."/>
            <person name="Li L."/>
            <person name="Zhou R."/>
            <person name="Xiao S."/>
            <person name="Wan Y."/>
            <person name="Zhang S."/>
            <person name="Wang K."/>
            <person name="Li W."/>
            <person name="Li L."/>
            <person name="Jin H."/>
            <person name="Kang M."/>
            <person name="Dalai B."/>
            <person name="Li T."/>
            <person name="Liu L."/>
            <person name="Cheng Y."/>
            <person name="Zhang L."/>
            <person name="Xu T."/>
            <person name="Zheng H."/>
            <person name="Pu S."/>
            <person name="Wang B."/>
            <person name="Gu W."/>
            <person name="Zhang X.L."/>
            <person name="Zhu G.-F."/>
            <person name="Wang S."/>
            <person name="Zhao G.-P."/>
            <person name="Chen H."/>
        </authorList>
    </citation>
    <scope>NUCLEOTIDE SEQUENCE [LARGE SCALE GENOMIC DNA]</scope>
    <source>
        <strain>JL03</strain>
    </source>
</reference>
<feature type="chain" id="PRO_1000198533" description="tRNA/tmRNA (uracil-C(5))-methyltransferase">
    <location>
        <begin position="1"/>
        <end position="368"/>
    </location>
</feature>
<feature type="active site" description="Nucleophile" evidence="1">
    <location>
        <position position="326"/>
    </location>
</feature>
<feature type="active site" description="Proton acceptor" evidence="1">
    <location>
        <position position="360"/>
    </location>
</feature>
<feature type="binding site" evidence="1">
    <location>
        <position position="192"/>
    </location>
    <ligand>
        <name>S-adenosyl-L-methionine</name>
        <dbReference type="ChEBI" id="CHEBI:59789"/>
    </ligand>
</feature>
<feature type="binding site" evidence="1">
    <location>
        <position position="220"/>
    </location>
    <ligand>
        <name>S-adenosyl-L-methionine</name>
        <dbReference type="ChEBI" id="CHEBI:59789"/>
    </ligand>
</feature>
<feature type="binding site" evidence="1">
    <location>
        <position position="225"/>
    </location>
    <ligand>
        <name>S-adenosyl-L-methionine</name>
        <dbReference type="ChEBI" id="CHEBI:59789"/>
    </ligand>
</feature>
<feature type="binding site" evidence="1">
    <location>
        <position position="241"/>
    </location>
    <ligand>
        <name>S-adenosyl-L-methionine</name>
        <dbReference type="ChEBI" id="CHEBI:59789"/>
    </ligand>
</feature>
<feature type="binding site" evidence="1">
    <location>
        <position position="301"/>
    </location>
    <ligand>
        <name>S-adenosyl-L-methionine</name>
        <dbReference type="ChEBI" id="CHEBI:59789"/>
    </ligand>
</feature>